<name>KHSE_MYCUA</name>
<dbReference type="EC" id="2.7.1.39" evidence="1"/>
<dbReference type="EMBL" id="CP000325">
    <property type="protein sequence ID" value="ABL06033.1"/>
    <property type="molecule type" value="Genomic_DNA"/>
</dbReference>
<dbReference type="RefSeq" id="WP_011741638.1">
    <property type="nucleotide sequence ID" value="NC_008611.1"/>
</dbReference>
<dbReference type="SMR" id="A0PUL4"/>
<dbReference type="KEGG" id="mul:MUL_3968"/>
<dbReference type="eggNOG" id="COG0083">
    <property type="taxonomic scope" value="Bacteria"/>
</dbReference>
<dbReference type="HOGENOM" id="CLU_041243_0_2_11"/>
<dbReference type="UniPathway" id="UPA00050">
    <property type="reaction ID" value="UER00064"/>
</dbReference>
<dbReference type="Proteomes" id="UP000000765">
    <property type="component" value="Chromosome"/>
</dbReference>
<dbReference type="GO" id="GO:0005737">
    <property type="term" value="C:cytoplasm"/>
    <property type="evidence" value="ECO:0007669"/>
    <property type="project" value="UniProtKB-SubCell"/>
</dbReference>
<dbReference type="GO" id="GO:0005524">
    <property type="term" value="F:ATP binding"/>
    <property type="evidence" value="ECO:0007669"/>
    <property type="project" value="UniProtKB-UniRule"/>
</dbReference>
<dbReference type="GO" id="GO:0004413">
    <property type="term" value="F:homoserine kinase activity"/>
    <property type="evidence" value="ECO:0007669"/>
    <property type="project" value="UniProtKB-UniRule"/>
</dbReference>
<dbReference type="GO" id="GO:0009088">
    <property type="term" value="P:threonine biosynthetic process"/>
    <property type="evidence" value="ECO:0007669"/>
    <property type="project" value="UniProtKB-UniRule"/>
</dbReference>
<dbReference type="Gene3D" id="3.30.230.10">
    <property type="match status" value="1"/>
</dbReference>
<dbReference type="Gene3D" id="3.30.70.890">
    <property type="entry name" value="GHMP kinase, C-terminal domain"/>
    <property type="match status" value="1"/>
</dbReference>
<dbReference type="HAMAP" id="MF_00384">
    <property type="entry name" value="Homoser_kinase"/>
    <property type="match status" value="1"/>
</dbReference>
<dbReference type="InterPro" id="IPR013750">
    <property type="entry name" value="GHMP_kinase_C_dom"/>
</dbReference>
<dbReference type="InterPro" id="IPR036554">
    <property type="entry name" value="GHMP_kinase_C_sf"/>
</dbReference>
<dbReference type="InterPro" id="IPR006204">
    <property type="entry name" value="GHMP_kinase_N_dom"/>
</dbReference>
<dbReference type="InterPro" id="IPR006203">
    <property type="entry name" value="GHMP_knse_ATP-bd_CS"/>
</dbReference>
<dbReference type="InterPro" id="IPR000870">
    <property type="entry name" value="Homoserine_kinase"/>
</dbReference>
<dbReference type="InterPro" id="IPR020568">
    <property type="entry name" value="Ribosomal_Su5_D2-typ_SF"/>
</dbReference>
<dbReference type="InterPro" id="IPR014721">
    <property type="entry name" value="Ribsml_uS5_D2-typ_fold_subgr"/>
</dbReference>
<dbReference type="NCBIfam" id="TIGR00191">
    <property type="entry name" value="thrB"/>
    <property type="match status" value="1"/>
</dbReference>
<dbReference type="PANTHER" id="PTHR20861:SF1">
    <property type="entry name" value="HOMOSERINE KINASE"/>
    <property type="match status" value="1"/>
</dbReference>
<dbReference type="PANTHER" id="PTHR20861">
    <property type="entry name" value="HOMOSERINE/4-DIPHOSPHOCYTIDYL-2-C-METHYL-D-ERYTHRITOL KINASE"/>
    <property type="match status" value="1"/>
</dbReference>
<dbReference type="Pfam" id="PF08544">
    <property type="entry name" value="GHMP_kinases_C"/>
    <property type="match status" value="1"/>
</dbReference>
<dbReference type="Pfam" id="PF00288">
    <property type="entry name" value="GHMP_kinases_N"/>
    <property type="match status" value="1"/>
</dbReference>
<dbReference type="PIRSF" id="PIRSF000676">
    <property type="entry name" value="Homoser_kin"/>
    <property type="match status" value="1"/>
</dbReference>
<dbReference type="PRINTS" id="PR00958">
    <property type="entry name" value="HOMSERKINASE"/>
</dbReference>
<dbReference type="SUPFAM" id="SSF55060">
    <property type="entry name" value="GHMP Kinase, C-terminal domain"/>
    <property type="match status" value="1"/>
</dbReference>
<dbReference type="SUPFAM" id="SSF54211">
    <property type="entry name" value="Ribosomal protein S5 domain 2-like"/>
    <property type="match status" value="1"/>
</dbReference>
<dbReference type="PROSITE" id="PS00627">
    <property type="entry name" value="GHMP_KINASES_ATP"/>
    <property type="match status" value="1"/>
</dbReference>
<comment type="function">
    <text evidence="1">Catalyzes the ATP-dependent phosphorylation of L-homoserine to L-homoserine phosphate.</text>
</comment>
<comment type="catalytic activity">
    <reaction evidence="1">
        <text>L-homoserine + ATP = O-phospho-L-homoserine + ADP + H(+)</text>
        <dbReference type="Rhea" id="RHEA:13985"/>
        <dbReference type="ChEBI" id="CHEBI:15378"/>
        <dbReference type="ChEBI" id="CHEBI:30616"/>
        <dbReference type="ChEBI" id="CHEBI:57476"/>
        <dbReference type="ChEBI" id="CHEBI:57590"/>
        <dbReference type="ChEBI" id="CHEBI:456216"/>
        <dbReference type="EC" id="2.7.1.39"/>
    </reaction>
</comment>
<comment type="pathway">
    <text evidence="1">Amino-acid biosynthesis; L-threonine biosynthesis; L-threonine from L-aspartate: step 4/5.</text>
</comment>
<comment type="subcellular location">
    <subcellularLocation>
        <location evidence="1">Cytoplasm</location>
    </subcellularLocation>
</comment>
<comment type="similarity">
    <text evidence="1">Belongs to the GHMP kinase family. Homoserine kinase subfamily.</text>
</comment>
<sequence length="314" mass="32631">MTQVLPSGLVASAVVAASSANLGPGFDSLGLALSLYDEIVLETTDSGLEVVVEGEGAGQVPLNSEHLVVRAIQHGLRAVGVPATGLIVRCRNDIPHSRGLGSSASAVVGGLAAVNGLVSQAGWVPLSDQQLIQLSSEFEGHPDNAAAAVLGGAVVSWIERCGDRADYSAVQLDLHPDIHLFSAIPEVRSSTAETRVLLPDLVSHDDARFNISRAALLVVALTQRPDLLMAATEDVLHQPQRASAMPASAEYLQLLRRHKVAATLSGAGPALIALTTNPDLPPEAVEYGAANGFTITAMTAGDRVRWKPGVAFSD</sequence>
<proteinExistence type="inferred from homology"/>
<organism>
    <name type="scientific">Mycobacterium ulcerans (strain Agy99)</name>
    <dbReference type="NCBI Taxonomy" id="362242"/>
    <lineage>
        <taxon>Bacteria</taxon>
        <taxon>Bacillati</taxon>
        <taxon>Actinomycetota</taxon>
        <taxon>Actinomycetes</taxon>
        <taxon>Mycobacteriales</taxon>
        <taxon>Mycobacteriaceae</taxon>
        <taxon>Mycobacterium</taxon>
        <taxon>Mycobacterium ulcerans group</taxon>
    </lineage>
</organism>
<feature type="chain" id="PRO_1000049151" description="Homoserine kinase">
    <location>
        <begin position="1"/>
        <end position="314"/>
    </location>
</feature>
<feature type="binding site" evidence="1">
    <location>
        <begin position="95"/>
        <end position="105"/>
    </location>
    <ligand>
        <name>ATP</name>
        <dbReference type="ChEBI" id="CHEBI:30616"/>
    </ligand>
</feature>
<keyword id="KW-0028">Amino-acid biosynthesis</keyword>
<keyword id="KW-0067">ATP-binding</keyword>
<keyword id="KW-0963">Cytoplasm</keyword>
<keyword id="KW-0418">Kinase</keyword>
<keyword id="KW-0547">Nucleotide-binding</keyword>
<keyword id="KW-0791">Threonine biosynthesis</keyword>
<keyword id="KW-0808">Transferase</keyword>
<evidence type="ECO:0000255" key="1">
    <source>
        <dbReference type="HAMAP-Rule" id="MF_00384"/>
    </source>
</evidence>
<gene>
    <name evidence="1" type="primary">thrB</name>
    <name type="ordered locus">MUL_3968</name>
</gene>
<reference key="1">
    <citation type="journal article" date="2007" name="Genome Res.">
        <title>Reductive evolution and niche adaptation inferred from the genome of Mycobacterium ulcerans, the causative agent of Buruli ulcer.</title>
        <authorList>
            <person name="Stinear T.P."/>
            <person name="Seemann T."/>
            <person name="Pidot S."/>
            <person name="Frigui W."/>
            <person name="Reysset G."/>
            <person name="Garnier T."/>
            <person name="Meurice G."/>
            <person name="Simon D."/>
            <person name="Bouchier C."/>
            <person name="Ma L."/>
            <person name="Tichit M."/>
            <person name="Porter J.L."/>
            <person name="Ryan J."/>
            <person name="Johnson P.D.R."/>
            <person name="Davies J.K."/>
            <person name="Jenkin G.A."/>
            <person name="Small P.L.C."/>
            <person name="Jones L.M."/>
            <person name="Tekaia F."/>
            <person name="Laval F."/>
            <person name="Daffe M."/>
            <person name="Parkhill J."/>
            <person name="Cole S.T."/>
        </authorList>
    </citation>
    <scope>NUCLEOTIDE SEQUENCE [LARGE SCALE GENOMIC DNA]</scope>
    <source>
        <strain>Agy99</strain>
    </source>
</reference>
<accession>A0PUL4</accession>
<protein>
    <recommendedName>
        <fullName evidence="1">Homoserine kinase</fullName>
        <shortName evidence="1">HK</shortName>
        <shortName evidence="1">HSK</shortName>
        <ecNumber evidence="1">2.7.1.39</ecNumber>
    </recommendedName>
</protein>